<comment type="function">
    <text evidence="1">Functions as an E3 ubiquitin ligase.</text>
</comment>
<comment type="catalytic activity">
    <reaction>
        <text>S-ubiquitinyl-[E2 ubiquitin-conjugating enzyme]-L-cysteine + [acceptor protein]-L-lysine = [E2 ubiquitin-conjugating enzyme]-L-cysteine + N(6)-ubiquitinyl-[acceptor protein]-L-lysine.</text>
        <dbReference type="EC" id="2.3.2.27"/>
    </reaction>
</comment>
<comment type="pathway">
    <text>Protein modification; protein ubiquitination.</text>
</comment>
<proteinExistence type="evidence at transcript level"/>
<evidence type="ECO:0000250" key="1"/>
<evidence type="ECO:0000305" key="2"/>
<dbReference type="EC" id="2.3.2.27"/>
<dbReference type="EMBL" id="AB025624">
    <property type="protein sequence ID" value="BAB02462.1"/>
    <property type="molecule type" value="Genomic_DNA"/>
</dbReference>
<dbReference type="EMBL" id="CP002686">
    <property type="protein sequence ID" value="AEE76233.1"/>
    <property type="molecule type" value="Genomic_DNA"/>
</dbReference>
<dbReference type="EMBL" id="BT025982">
    <property type="protein sequence ID" value="ABG25071.1"/>
    <property type="molecule type" value="mRNA"/>
</dbReference>
<dbReference type="EMBL" id="AY086503">
    <property type="protein sequence ID" value="AAM63504.1"/>
    <property type="molecule type" value="mRNA"/>
</dbReference>
<dbReference type="EMBL" id="AK229923">
    <property type="protein sequence ID" value="BAF01749.1"/>
    <property type="molecule type" value="mRNA"/>
</dbReference>
<dbReference type="RefSeq" id="NP_566632.1">
    <property type="nucleotide sequence ID" value="NM_112825.4"/>
</dbReference>
<dbReference type="SMR" id="Q9LT79"/>
<dbReference type="FunCoup" id="Q9LT79">
    <property type="interactions" value="15"/>
</dbReference>
<dbReference type="STRING" id="3702.Q9LT79"/>
<dbReference type="GlyGen" id="Q9LT79">
    <property type="glycosylation" value="1 site"/>
</dbReference>
<dbReference type="PaxDb" id="3702-AT3G19380.1"/>
<dbReference type="ProteomicsDB" id="226077"/>
<dbReference type="EnsemblPlants" id="AT3G19380.1">
    <property type="protein sequence ID" value="AT3G19380.1"/>
    <property type="gene ID" value="AT3G19380"/>
</dbReference>
<dbReference type="GeneID" id="821472"/>
<dbReference type="Gramene" id="AT3G19380.1">
    <property type="protein sequence ID" value="AT3G19380.1"/>
    <property type="gene ID" value="AT3G19380"/>
</dbReference>
<dbReference type="KEGG" id="ath:AT3G19380"/>
<dbReference type="Araport" id="AT3G19380"/>
<dbReference type="TAIR" id="AT3G19380">
    <property type="gene designation" value="PUB25"/>
</dbReference>
<dbReference type="eggNOG" id="ENOG502QRXY">
    <property type="taxonomic scope" value="Eukaryota"/>
</dbReference>
<dbReference type="HOGENOM" id="CLU_006348_1_1_1"/>
<dbReference type="InParanoid" id="Q9LT79"/>
<dbReference type="OMA" id="ICSHEAR"/>
<dbReference type="PhylomeDB" id="Q9LT79"/>
<dbReference type="UniPathway" id="UPA00143"/>
<dbReference type="PRO" id="PR:Q9LT79"/>
<dbReference type="Proteomes" id="UP000006548">
    <property type="component" value="Chromosome 3"/>
</dbReference>
<dbReference type="ExpressionAtlas" id="Q9LT79">
    <property type="expression patterns" value="baseline and differential"/>
</dbReference>
<dbReference type="GO" id="GO:0061630">
    <property type="term" value="F:ubiquitin protein ligase activity"/>
    <property type="evidence" value="ECO:0000314"/>
    <property type="project" value="TAIR"/>
</dbReference>
<dbReference type="GO" id="GO:0098542">
    <property type="term" value="P:defense response to other organism"/>
    <property type="evidence" value="ECO:0000315"/>
    <property type="project" value="TAIR"/>
</dbReference>
<dbReference type="GO" id="GO:0016567">
    <property type="term" value="P:protein ubiquitination"/>
    <property type="evidence" value="ECO:0000314"/>
    <property type="project" value="TAIR"/>
</dbReference>
<dbReference type="CDD" id="cd16664">
    <property type="entry name" value="RING-Ubox_PUB"/>
    <property type="match status" value="1"/>
</dbReference>
<dbReference type="FunFam" id="3.30.40.10:FF:000437">
    <property type="entry name" value="RING-type E3 ubiquitin transferase"/>
    <property type="match status" value="1"/>
</dbReference>
<dbReference type="Gene3D" id="1.25.10.10">
    <property type="entry name" value="Leucine-rich Repeat Variant"/>
    <property type="match status" value="1"/>
</dbReference>
<dbReference type="Gene3D" id="3.30.40.10">
    <property type="entry name" value="Zinc/RING finger domain, C3HC4 (zinc finger)"/>
    <property type="match status" value="1"/>
</dbReference>
<dbReference type="InterPro" id="IPR011989">
    <property type="entry name" value="ARM-like"/>
</dbReference>
<dbReference type="InterPro" id="IPR016024">
    <property type="entry name" value="ARM-type_fold"/>
</dbReference>
<dbReference type="InterPro" id="IPR045185">
    <property type="entry name" value="PUB22/23/24-like"/>
</dbReference>
<dbReference type="InterPro" id="IPR045210">
    <property type="entry name" value="RING-Ubox_PUB"/>
</dbReference>
<dbReference type="InterPro" id="IPR003613">
    <property type="entry name" value="Ubox_domain"/>
</dbReference>
<dbReference type="InterPro" id="IPR013083">
    <property type="entry name" value="Znf_RING/FYVE/PHD"/>
</dbReference>
<dbReference type="PANTHER" id="PTHR22849:SF116">
    <property type="entry name" value="U-BOX DOMAIN-CONTAINING PROTEIN 25"/>
    <property type="match status" value="1"/>
</dbReference>
<dbReference type="PANTHER" id="PTHR22849">
    <property type="entry name" value="WDSAM1 PROTEIN"/>
    <property type="match status" value="1"/>
</dbReference>
<dbReference type="Pfam" id="PF04564">
    <property type="entry name" value="U-box"/>
    <property type="match status" value="1"/>
</dbReference>
<dbReference type="SMART" id="SM00504">
    <property type="entry name" value="Ubox"/>
    <property type="match status" value="1"/>
</dbReference>
<dbReference type="SUPFAM" id="SSF48371">
    <property type="entry name" value="ARM repeat"/>
    <property type="match status" value="1"/>
</dbReference>
<dbReference type="SUPFAM" id="SSF57850">
    <property type="entry name" value="RING/U-box"/>
    <property type="match status" value="1"/>
</dbReference>
<dbReference type="PROSITE" id="PS51698">
    <property type="entry name" value="U_BOX"/>
    <property type="match status" value="1"/>
</dbReference>
<sequence>MPRNIEPLDLGIQIPYHFRCPISLELMQDPVTVCTGQTYDRASIESWVSIGNNTTCPVTRAPLSDFTLIPNHTLRRLIQEWCVANRSNGVERIPTPKQPADPTSVRALLSQASAITGTHVSVRSRAAALRRLRGFARDSDKNRVLIAAHNATEILIKILFSETTSSELVSESLALLVMLPITEPNQFVSISSDPGRVEFLTRLLFDSSIETRVNAAALIEIVSTGTKSADLKGSISNSESVFEGVLDLLRNPISSRRALKIGIKTLFALCSVKSTRHIAITAGAPEILIDRLAADFDRCDTERALATVELLCRTPEGCAAFGEHALTVPLLVKTILRVSDRATEYAAGALLALCTAEERWREEAAGAGVVVQLLLMVQSECTERAKKKAQKLLKLLRDSWPDYNSFANSDDFGCSSQVVPF</sequence>
<gene>
    <name type="primary">PUB25</name>
    <name type="ordered locus">At3g19380</name>
    <name type="ORF">MLD14.11</name>
</gene>
<accession>Q9LT79</accession>
<accession>Q0WMA7</accession>
<reference key="1">
    <citation type="journal article" date="2000" name="DNA Res.">
        <title>Structural analysis of Arabidopsis thaliana chromosome 3. I. Sequence features of the regions of 4,504,864 bp covered by sixty P1 and TAC clones.</title>
        <authorList>
            <person name="Sato S."/>
            <person name="Nakamura Y."/>
            <person name="Kaneko T."/>
            <person name="Katoh T."/>
            <person name="Asamizu E."/>
            <person name="Tabata S."/>
        </authorList>
    </citation>
    <scope>NUCLEOTIDE SEQUENCE [LARGE SCALE GENOMIC DNA]</scope>
    <source>
        <strain>cv. Columbia</strain>
    </source>
</reference>
<reference key="2">
    <citation type="journal article" date="2017" name="Plant J.">
        <title>Araport11: a complete reannotation of the Arabidopsis thaliana reference genome.</title>
        <authorList>
            <person name="Cheng C.Y."/>
            <person name="Krishnakumar V."/>
            <person name="Chan A.P."/>
            <person name="Thibaud-Nissen F."/>
            <person name="Schobel S."/>
            <person name="Town C.D."/>
        </authorList>
    </citation>
    <scope>GENOME REANNOTATION</scope>
    <source>
        <strain>cv. Columbia</strain>
    </source>
</reference>
<reference key="3">
    <citation type="submission" date="2006-06" db="EMBL/GenBank/DDBJ databases">
        <title>Arabidopsis ORF clones.</title>
        <authorList>
            <person name="Shinn P."/>
            <person name="Chen H."/>
            <person name="Kim C.J."/>
            <person name="Quinitio C."/>
            <person name="Ecker J.R."/>
        </authorList>
    </citation>
    <scope>NUCLEOTIDE SEQUENCE [LARGE SCALE MRNA]</scope>
    <source>
        <strain>cv. Columbia</strain>
    </source>
</reference>
<reference key="4">
    <citation type="submission" date="2002-03" db="EMBL/GenBank/DDBJ databases">
        <title>Full-length cDNA from Arabidopsis thaliana.</title>
        <authorList>
            <person name="Brover V.V."/>
            <person name="Troukhan M.E."/>
            <person name="Alexandrov N.A."/>
            <person name="Lu Y.-P."/>
            <person name="Flavell R.B."/>
            <person name="Feldmann K.A."/>
        </authorList>
    </citation>
    <scope>NUCLEOTIDE SEQUENCE [LARGE SCALE MRNA]</scope>
</reference>
<reference key="5">
    <citation type="submission" date="2006-07" db="EMBL/GenBank/DDBJ databases">
        <title>Large-scale analysis of RIKEN Arabidopsis full-length (RAFL) cDNAs.</title>
        <authorList>
            <person name="Totoki Y."/>
            <person name="Seki M."/>
            <person name="Ishida J."/>
            <person name="Nakajima M."/>
            <person name="Enju A."/>
            <person name="Kamiya A."/>
            <person name="Narusaka M."/>
            <person name="Shin-i T."/>
            <person name="Nakagawa M."/>
            <person name="Sakamoto N."/>
            <person name="Oishi K."/>
            <person name="Kohara Y."/>
            <person name="Kobayashi M."/>
            <person name="Toyoda A."/>
            <person name="Sakaki Y."/>
            <person name="Sakurai T."/>
            <person name="Iida K."/>
            <person name="Akiyama K."/>
            <person name="Satou M."/>
            <person name="Toyoda T."/>
            <person name="Konagaya A."/>
            <person name="Carninci P."/>
            <person name="Kawai J."/>
            <person name="Hayashizaki Y."/>
            <person name="Shinozaki K."/>
        </authorList>
    </citation>
    <scope>NUCLEOTIDE SEQUENCE [LARGE SCALE MRNA] OF 3-421</scope>
    <source>
        <strain>cv. Columbia</strain>
    </source>
</reference>
<reference key="6">
    <citation type="journal article" date="2001" name="Trends Plant Sci.">
        <title>The U-box protein family in plants.</title>
        <authorList>
            <person name="Azevedo C."/>
            <person name="Santos-Rosa M.J."/>
            <person name="Shirasu K."/>
        </authorList>
    </citation>
    <scope>GENE FAMILY ORGANIZATION</scope>
    <scope>NOMENCLATURE</scope>
</reference>
<reference key="7">
    <citation type="journal article" date="2004" name="Plant Physiol.">
        <title>A large complement of the predicted Arabidopsis ARM repeat proteins are members of the U-box E3 ubiquitin ligase family.</title>
        <authorList>
            <person name="Mudgil Y."/>
            <person name="Shiu S.-H."/>
            <person name="Stone S.L."/>
            <person name="Salt J.N."/>
            <person name="Goring D.R."/>
        </authorList>
    </citation>
    <scope>GENE FAMILY ORGANIZATION</scope>
</reference>
<feature type="chain" id="PRO_0000322169" description="U-box domain-containing protein 25">
    <location>
        <begin position="1"/>
        <end position="421"/>
    </location>
</feature>
<feature type="domain" description="U-box">
    <location>
        <begin position="13"/>
        <end position="88"/>
    </location>
</feature>
<feature type="sequence conflict" description="In Ref. 5; BAF01749." evidence="2" ref="5">
    <original>A</original>
    <variation>T</variation>
    <location>
        <position position="148"/>
    </location>
</feature>
<organism>
    <name type="scientific">Arabidopsis thaliana</name>
    <name type="common">Mouse-ear cress</name>
    <dbReference type="NCBI Taxonomy" id="3702"/>
    <lineage>
        <taxon>Eukaryota</taxon>
        <taxon>Viridiplantae</taxon>
        <taxon>Streptophyta</taxon>
        <taxon>Embryophyta</taxon>
        <taxon>Tracheophyta</taxon>
        <taxon>Spermatophyta</taxon>
        <taxon>Magnoliopsida</taxon>
        <taxon>eudicotyledons</taxon>
        <taxon>Gunneridae</taxon>
        <taxon>Pentapetalae</taxon>
        <taxon>rosids</taxon>
        <taxon>malvids</taxon>
        <taxon>Brassicales</taxon>
        <taxon>Brassicaceae</taxon>
        <taxon>Camelineae</taxon>
        <taxon>Arabidopsis</taxon>
    </lineage>
</organism>
<protein>
    <recommendedName>
        <fullName>U-box domain-containing protein 25</fullName>
        <ecNumber>2.3.2.27</ecNumber>
    </recommendedName>
    <alternativeName>
        <fullName>Plant U-box protein 25</fullName>
    </alternativeName>
    <alternativeName>
        <fullName evidence="2">RING-type E3 ubiquitin transferase PUB25</fullName>
    </alternativeName>
</protein>
<keyword id="KW-1185">Reference proteome</keyword>
<keyword id="KW-0808">Transferase</keyword>
<keyword id="KW-0833">Ubl conjugation pathway</keyword>
<name>PUB25_ARATH</name>